<keyword id="KW-0963">Cytoplasm</keyword>
<keyword id="KW-1185">Reference proteome</keyword>
<keyword id="KW-0694">RNA-binding</keyword>
<keyword id="KW-0808">Transferase</keyword>
<keyword id="KW-0819">tRNA processing</keyword>
<keyword id="KW-0820">tRNA-binding</keyword>
<reference key="1">
    <citation type="journal article" date="2007" name="Proc. Natl. Acad. Sci. U.S.A.">
        <title>Dandruff-associated Malassezia genomes reveal convergent and divergent virulence traits shared with plant and human fungal pathogens.</title>
        <authorList>
            <person name="Xu J."/>
            <person name="Saunders C.W."/>
            <person name="Hu P."/>
            <person name="Grant R.A."/>
            <person name="Boekhout T."/>
            <person name="Kuramae E.E."/>
            <person name="Kronstad J.W."/>
            <person name="DeAngelis Y.M."/>
            <person name="Reeder N.L."/>
            <person name="Johnstone K.R."/>
            <person name="Leland M."/>
            <person name="Fieno A.M."/>
            <person name="Begley W.M."/>
            <person name="Sun Y."/>
            <person name="Lacey M.P."/>
            <person name="Chaudhary T."/>
            <person name="Keough T."/>
            <person name="Chu L."/>
            <person name="Sears R."/>
            <person name="Yuan B."/>
            <person name="Dawson T.L. Jr."/>
        </authorList>
    </citation>
    <scope>NUCLEOTIDE SEQUENCE [LARGE SCALE GENOMIC DNA]</scope>
    <source>
        <strain>ATCC MYA-4612 / CBS 7966</strain>
    </source>
</reference>
<sequence>MPRECELCGTERAVLRRPKTGDLVCRACFFHVFETEVHQTIVEAQLFRRGDRVAIGASGGKDSTVLAYVMKTLNERYDYGLNLFLLSIDEGITGYRDDSLETVKRNQEQYGIPLKVLGYKELYGWSMDDIVASIGRKNNCTFCGVFRRQALDRGAASLGVDHIVTGHNADDMAETVLMNVLRGDIARLERCTDIITKGPDGVDGDEDDDETEGCGAGRSGFGGSGIRRSKPFKYAYEKEIVMYAYFKQLDYFSTECIYSPNAYRGYARAFLKDLESIRPSSIIDIIHSGENLHVAGQVKRAVQRTCTRCGYISSNELCKACVLLEGLNRGAPALGVRSDKSRAVREARLDGTSDIGRTIPRWEGVQRSSATAW</sequence>
<feature type="chain" id="PRO_0000368265" description="Cytoplasmic tRNA 2-thiolation protein 1">
    <location>
        <begin position="1"/>
        <end position="373"/>
    </location>
</feature>
<evidence type="ECO:0000255" key="1">
    <source>
        <dbReference type="HAMAP-Rule" id="MF_03053"/>
    </source>
</evidence>
<proteinExistence type="inferred from homology"/>
<organism>
    <name type="scientific">Malassezia globosa (strain ATCC MYA-4612 / CBS 7966)</name>
    <name type="common">Dandruff-associated fungus</name>
    <dbReference type="NCBI Taxonomy" id="425265"/>
    <lineage>
        <taxon>Eukaryota</taxon>
        <taxon>Fungi</taxon>
        <taxon>Dikarya</taxon>
        <taxon>Basidiomycota</taxon>
        <taxon>Ustilaginomycotina</taxon>
        <taxon>Malasseziomycetes</taxon>
        <taxon>Malasseziales</taxon>
        <taxon>Malasseziaceae</taxon>
        <taxon>Malassezia</taxon>
    </lineage>
</organism>
<gene>
    <name evidence="1" type="primary">NCS6</name>
    <name evidence="1" type="synonym">CTU1</name>
    <name type="ORF">MGL_0909</name>
</gene>
<dbReference type="EC" id="2.7.7.-" evidence="1"/>
<dbReference type="EMBL" id="AAYY01000003">
    <property type="protein sequence ID" value="EDP44427.1"/>
    <property type="molecule type" value="Genomic_DNA"/>
</dbReference>
<dbReference type="RefSeq" id="XP_001731641.1">
    <property type="nucleotide sequence ID" value="XM_001731589.1"/>
</dbReference>
<dbReference type="SMR" id="A8PVM6"/>
<dbReference type="FunCoup" id="A8PVM6">
    <property type="interactions" value="159"/>
</dbReference>
<dbReference type="STRING" id="425265.A8PVM6"/>
<dbReference type="GeneID" id="5855947"/>
<dbReference type="KEGG" id="mgl:MGL_0909"/>
<dbReference type="VEuPathDB" id="FungiDB:MGL_0909"/>
<dbReference type="InParanoid" id="A8PVM6"/>
<dbReference type="OMA" id="KPVRGIC"/>
<dbReference type="OrthoDB" id="198857at2759"/>
<dbReference type="UniPathway" id="UPA00988"/>
<dbReference type="Proteomes" id="UP000008837">
    <property type="component" value="Unassembled WGS sequence"/>
</dbReference>
<dbReference type="GO" id="GO:0005829">
    <property type="term" value="C:cytosol"/>
    <property type="evidence" value="ECO:0000250"/>
    <property type="project" value="UniProtKB"/>
</dbReference>
<dbReference type="GO" id="GO:0002144">
    <property type="term" value="C:cytosolic tRNA wobble base thiouridylase complex"/>
    <property type="evidence" value="ECO:0007669"/>
    <property type="project" value="TreeGrafter"/>
</dbReference>
<dbReference type="GO" id="GO:0005739">
    <property type="term" value="C:mitochondrion"/>
    <property type="evidence" value="ECO:0007669"/>
    <property type="project" value="TreeGrafter"/>
</dbReference>
<dbReference type="GO" id="GO:0016779">
    <property type="term" value="F:nucleotidyltransferase activity"/>
    <property type="evidence" value="ECO:0007669"/>
    <property type="project" value="UniProtKB-UniRule"/>
</dbReference>
<dbReference type="GO" id="GO:0000049">
    <property type="term" value="F:tRNA binding"/>
    <property type="evidence" value="ECO:0000250"/>
    <property type="project" value="UniProtKB"/>
</dbReference>
<dbReference type="GO" id="GO:0032447">
    <property type="term" value="P:protein urmylation"/>
    <property type="evidence" value="ECO:0007669"/>
    <property type="project" value="UniProtKB-UniRule"/>
</dbReference>
<dbReference type="GO" id="GO:0034227">
    <property type="term" value="P:tRNA thio-modification"/>
    <property type="evidence" value="ECO:0000250"/>
    <property type="project" value="UniProtKB"/>
</dbReference>
<dbReference type="GO" id="GO:0002143">
    <property type="term" value="P:tRNA wobble position uridine thiolation"/>
    <property type="evidence" value="ECO:0007669"/>
    <property type="project" value="TreeGrafter"/>
</dbReference>
<dbReference type="GO" id="GO:0002098">
    <property type="term" value="P:tRNA wobble uridine modification"/>
    <property type="evidence" value="ECO:0000250"/>
    <property type="project" value="UniProtKB"/>
</dbReference>
<dbReference type="CDD" id="cd01713">
    <property type="entry name" value="CTU1-like"/>
    <property type="match status" value="1"/>
</dbReference>
<dbReference type="FunFam" id="3.40.50.620:FF:000054">
    <property type="entry name" value="Cytoplasmic tRNA 2-thiolation protein 1"/>
    <property type="match status" value="1"/>
</dbReference>
<dbReference type="Gene3D" id="3.40.50.620">
    <property type="entry name" value="HUPs"/>
    <property type="match status" value="1"/>
</dbReference>
<dbReference type="HAMAP" id="MF_03053">
    <property type="entry name" value="CTU1"/>
    <property type="match status" value="1"/>
</dbReference>
<dbReference type="InterPro" id="IPR056369">
    <property type="entry name" value="CTU1-like_ATP-bd"/>
</dbReference>
<dbReference type="InterPro" id="IPR032442">
    <property type="entry name" value="CTU1_C"/>
</dbReference>
<dbReference type="InterPro" id="IPR000541">
    <property type="entry name" value="Ncs6/Tuc1/Ctu1"/>
</dbReference>
<dbReference type="InterPro" id="IPR014729">
    <property type="entry name" value="Rossmann-like_a/b/a_fold"/>
</dbReference>
<dbReference type="InterPro" id="IPR011063">
    <property type="entry name" value="TilS/TtcA_N"/>
</dbReference>
<dbReference type="InterPro" id="IPR035107">
    <property type="entry name" value="tRNA_thiolation_TtcA_Ctu1"/>
</dbReference>
<dbReference type="NCBIfam" id="TIGR00269">
    <property type="entry name" value="TIGR00269 family protein"/>
    <property type="match status" value="1"/>
</dbReference>
<dbReference type="PANTHER" id="PTHR11807">
    <property type="entry name" value="ATPASES OF THE PP SUPERFAMILY-RELATED"/>
    <property type="match status" value="1"/>
</dbReference>
<dbReference type="PANTHER" id="PTHR11807:SF12">
    <property type="entry name" value="CYTOPLASMIC TRNA 2-THIOLATION PROTEIN 1"/>
    <property type="match status" value="1"/>
</dbReference>
<dbReference type="Pfam" id="PF01171">
    <property type="entry name" value="ATP_bind_3"/>
    <property type="match status" value="1"/>
</dbReference>
<dbReference type="Pfam" id="PF16503">
    <property type="entry name" value="zn-ribbon_14"/>
    <property type="match status" value="1"/>
</dbReference>
<dbReference type="PIRSF" id="PIRSF004976">
    <property type="entry name" value="ATPase_YdaO"/>
    <property type="match status" value="1"/>
</dbReference>
<dbReference type="SUPFAM" id="SSF52402">
    <property type="entry name" value="Adenine nucleotide alpha hydrolases-like"/>
    <property type="match status" value="1"/>
</dbReference>
<name>CTU1_MALGO</name>
<accession>A8PVM6</accession>
<comment type="function">
    <text evidence="1">Plays a central role in 2-thiolation of mcm(5)S(2)U at tRNA wobble positions of tRNA(Lys), tRNA(Glu) and tRNA(Gln). Directly binds tRNAs and probably acts by catalyzing adenylation of tRNAs, an intermediate required for 2-thiolation. It is unclear whether it acts as a sulfurtransferase that transfers sulfur from thiocarboxylated URM1 onto the uridine of tRNAs at wobble position. Prior mcm(5) tRNA modification by the elongator complex is required for 2-thiolation. May also be involved in protein urmylation.</text>
</comment>
<comment type="pathway">
    <text evidence="1">tRNA modification; 5-methoxycarbonylmethyl-2-thiouridine-tRNA biosynthesis.</text>
</comment>
<comment type="subcellular location">
    <subcellularLocation>
        <location evidence="1">Cytoplasm</location>
    </subcellularLocation>
</comment>
<comment type="similarity">
    <text evidence="1">Belongs to the TtcA family. CTU1/NCS6/ATPBD3 subfamily.</text>
</comment>
<protein>
    <recommendedName>
        <fullName evidence="1">Cytoplasmic tRNA 2-thiolation protein 1</fullName>
        <ecNumber evidence="1">2.7.7.-</ecNumber>
    </recommendedName>
    <alternativeName>
        <fullName evidence="1">Cytoplasmic tRNA adenylyltransferase 1</fullName>
    </alternativeName>
</protein>